<protein>
    <recommendedName>
        <fullName>Kinesin-like protein KIF20A</fullName>
    </recommendedName>
    <alternativeName>
        <fullName>Kinesin-like protein 174</fullName>
    </alternativeName>
    <alternativeName>
        <fullName>Rab6-interacting kinesin-like protein</fullName>
    </alternativeName>
    <alternativeName>
        <fullName>Rabkinesin-6</fullName>
    </alternativeName>
</protein>
<reference key="1">
    <citation type="journal article" date="1998" name="Science">
        <title>Interaction of a Golgi-associated kinesin-like protein with Rab6.</title>
        <authorList>
            <person name="Echard A."/>
            <person name="Jollivet F."/>
            <person name="Martinez O."/>
            <person name="Lacapere J.-J."/>
            <person name="Rousselet A."/>
            <person name="Janoueix-Lerosey I."/>
            <person name="Goud B."/>
        </authorList>
    </citation>
    <scope>NUCLEOTIDE SEQUENCE [MRNA]</scope>
    <scope>FUNCTION</scope>
    <scope>SUBCELLULAR LOCATION</scope>
    <scope>TISSUE SPECIFICITY</scope>
    <source>
        <strain>BALB/cJ</strain>
        <tissue>Testis</tissue>
    </source>
</reference>
<reference key="2">
    <citation type="journal article" date="2005" name="Science">
        <title>The transcriptional landscape of the mammalian genome.</title>
        <authorList>
            <person name="Carninci P."/>
            <person name="Kasukawa T."/>
            <person name="Katayama S."/>
            <person name="Gough J."/>
            <person name="Frith M.C."/>
            <person name="Maeda N."/>
            <person name="Oyama R."/>
            <person name="Ravasi T."/>
            <person name="Lenhard B."/>
            <person name="Wells C."/>
            <person name="Kodzius R."/>
            <person name="Shimokawa K."/>
            <person name="Bajic V.B."/>
            <person name="Brenner S.E."/>
            <person name="Batalov S."/>
            <person name="Forrest A.R."/>
            <person name="Zavolan M."/>
            <person name="Davis M.J."/>
            <person name="Wilming L.G."/>
            <person name="Aidinis V."/>
            <person name="Allen J.E."/>
            <person name="Ambesi-Impiombato A."/>
            <person name="Apweiler R."/>
            <person name="Aturaliya R.N."/>
            <person name="Bailey T.L."/>
            <person name="Bansal M."/>
            <person name="Baxter L."/>
            <person name="Beisel K.W."/>
            <person name="Bersano T."/>
            <person name="Bono H."/>
            <person name="Chalk A.M."/>
            <person name="Chiu K.P."/>
            <person name="Choudhary V."/>
            <person name="Christoffels A."/>
            <person name="Clutterbuck D.R."/>
            <person name="Crowe M.L."/>
            <person name="Dalla E."/>
            <person name="Dalrymple B.P."/>
            <person name="de Bono B."/>
            <person name="Della Gatta G."/>
            <person name="di Bernardo D."/>
            <person name="Down T."/>
            <person name="Engstrom P."/>
            <person name="Fagiolini M."/>
            <person name="Faulkner G."/>
            <person name="Fletcher C.F."/>
            <person name="Fukushima T."/>
            <person name="Furuno M."/>
            <person name="Futaki S."/>
            <person name="Gariboldi M."/>
            <person name="Georgii-Hemming P."/>
            <person name="Gingeras T.R."/>
            <person name="Gojobori T."/>
            <person name="Green R.E."/>
            <person name="Gustincich S."/>
            <person name="Harbers M."/>
            <person name="Hayashi Y."/>
            <person name="Hensch T.K."/>
            <person name="Hirokawa N."/>
            <person name="Hill D."/>
            <person name="Huminiecki L."/>
            <person name="Iacono M."/>
            <person name="Ikeo K."/>
            <person name="Iwama A."/>
            <person name="Ishikawa T."/>
            <person name="Jakt M."/>
            <person name="Kanapin A."/>
            <person name="Katoh M."/>
            <person name="Kawasawa Y."/>
            <person name="Kelso J."/>
            <person name="Kitamura H."/>
            <person name="Kitano H."/>
            <person name="Kollias G."/>
            <person name="Krishnan S.P."/>
            <person name="Kruger A."/>
            <person name="Kummerfeld S.K."/>
            <person name="Kurochkin I.V."/>
            <person name="Lareau L.F."/>
            <person name="Lazarevic D."/>
            <person name="Lipovich L."/>
            <person name="Liu J."/>
            <person name="Liuni S."/>
            <person name="McWilliam S."/>
            <person name="Madan Babu M."/>
            <person name="Madera M."/>
            <person name="Marchionni L."/>
            <person name="Matsuda H."/>
            <person name="Matsuzawa S."/>
            <person name="Miki H."/>
            <person name="Mignone F."/>
            <person name="Miyake S."/>
            <person name="Morris K."/>
            <person name="Mottagui-Tabar S."/>
            <person name="Mulder N."/>
            <person name="Nakano N."/>
            <person name="Nakauchi H."/>
            <person name="Ng P."/>
            <person name="Nilsson R."/>
            <person name="Nishiguchi S."/>
            <person name="Nishikawa S."/>
            <person name="Nori F."/>
            <person name="Ohara O."/>
            <person name="Okazaki Y."/>
            <person name="Orlando V."/>
            <person name="Pang K.C."/>
            <person name="Pavan W.J."/>
            <person name="Pavesi G."/>
            <person name="Pesole G."/>
            <person name="Petrovsky N."/>
            <person name="Piazza S."/>
            <person name="Reed J."/>
            <person name="Reid J.F."/>
            <person name="Ring B.Z."/>
            <person name="Ringwald M."/>
            <person name="Rost B."/>
            <person name="Ruan Y."/>
            <person name="Salzberg S.L."/>
            <person name="Sandelin A."/>
            <person name="Schneider C."/>
            <person name="Schoenbach C."/>
            <person name="Sekiguchi K."/>
            <person name="Semple C.A."/>
            <person name="Seno S."/>
            <person name="Sessa L."/>
            <person name="Sheng Y."/>
            <person name="Shibata Y."/>
            <person name="Shimada H."/>
            <person name="Shimada K."/>
            <person name="Silva D."/>
            <person name="Sinclair B."/>
            <person name="Sperling S."/>
            <person name="Stupka E."/>
            <person name="Sugiura K."/>
            <person name="Sultana R."/>
            <person name="Takenaka Y."/>
            <person name="Taki K."/>
            <person name="Tammoja K."/>
            <person name="Tan S.L."/>
            <person name="Tang S."/>
            <person name="Taylor M.S."/>
            <person name="Tegner J."/>
            <person name="Teichmann S.A."/>
            <person name="Ueda H.R."/>
            <person name="van Nimwegen E."/>
            <person name="Verardo R."/>
            <person name="Wei C.L."/>
            <person name="Yagi K."/>
            <person name="Yamanishi H."/>
            <person name="Zabarovsky E."/>
            <person name="Zhu S."/>
            <person name="Zimmer A."/>
            <person name="Hide W."/>
            <person name="Bult C."/>
            <person name="Grimmond S.M."/>
            <person name="Teasdale R.D."/>
            <person name="Liu E.T."/>
            <person name="Brusic V."/>
            <person name="Quackenbush J."/>
            <person name="Wahlestedt C."/>
            <person name="Mattick J.S."/>
            <person name="Hume D.A."/>
            <person name="Kai C."/>
            <person name="Sasaki D."/>
            <person name="Tomaru Y."/>
            <person name="Fukuda S."/>
            <person name="Kanamori-Katayama M."/>
            <person name="Suzuki M."/>
            <person name="Aoki J."/>
            <person name="Arakawa T."/>
            <person name="Iida J."/>
            <person name="Imamura K."/>
            <person name="Itoh M."/>
            <person name="Kato T."/>
            <person name="Kawaji H."/>
            <person name="Kawagashira N."/>
            <person name="Kawashima T."/>
            <person name="Kojima M."/>
            <person name="Kondo S."/>
            <person name="Konno H."/>
            <person name="Nakano K."/>
            <person name="Ninomiya N."/>
            <person name="Nishio T."/>
            <person name="Okada M."/>
            <person name="Plessy C."/>
            <person name="Shibata K."/>
            <person name="Shiraki T."/>
            <person name="Suzuki S."/>
            <person name="Tagami M."/>
            <person name="Waki K."/>
            <person name="Watahiki A."/>
            <person name="Okamura-Oho Y."/>
            <person name="Suzuki H."/>
            <person name="Kawai J."/>
            <person name="Hayashizaki Y."/>
        </authorList>
    </citation>
    <scope>NUCLEOTIDE SEQUENCE [LARGE SCALE MRNA]</scope>
    <source>
        <strain>C57BL/6J</strain>
        <tissue>Heart</tissue>
        <tissue>Lung</tissue>
    </source>
</reference>
<reference key="3">
    <citation type="journal article" date="2004" name="Genome Res.">
        <title>The status, quality, and expansion of the NIH full-length cDNA project: the Mammalian Gene Collection (MGC).</title>
        <authorList>
            <consortium name="The MGC Project Team"/>
        </authorList>
    </citation>
    <scope>NUCLEOTIDE SEQUENCE [LARGE SCALE MRNA]</scope>
    <source>
        <strain>C57BL/6J</strain>
        <tissue>Brain</tissue>
    </source>
</reference>
<evidence type="ECO:0000250" key="1"/>
<evidence type="ECO:0000250" key="2">
    <source>
        <dbReference type="UniProtKB" id="O95235"/>
    </source>
</evidence>
<evidence type="ECO:0000255" key="3"/>
<evidence type="ECO:0000255" key="4">
    <source>
        <dbReference type="PROSITE-ProRule" id="PRU00283"/>
    </source>
</evidence>
<evidence type="ECO:0000256" key="5">
    <source>
        <dbReference type="SAM" id="MobiDB-lite"/>
    </source>
</evidence>
<evidence type="ECO:0000269" key="6">
    <source>
    </source>
</evidence>
<evidence type="ECO:0000305" key="7">
    <source>
    </source>
</evidence>
<evidence type="ECO:0007829" key="8">
    <source>
        <dbReference type="PDB" id="5LEF"/>
    </source>
</evidence>
<evidence type="ECO:0007829" key="9">
    <source>
        <dbReference type="PDB" id="8F18"/>
    </source>
</evidence>
<evidence type="ECO:0007829" key="10">
    <source>
        <dbReference type="PDB" id="8F1A"/>
    </source>
</evidence>
<sequence>MSHRILSPPAGLLSDEDVVDSPILESTAADLRSVVRKDLLSDCSVISASLEDKQALLEDTSEKVKVYLRIRPFLTSELDRQEDQGCVCIENTETLVLQAPKDSFALKSNERGVGQATHKFTFSQIFGPEVGQVAFFNLTMKEMVKDVLKGQNWLIYTYGVTNSGKTYTIQGTSKDAGILPQSLALIFNSLQGQLHPTPDLKPLLSNEVIWLDSKQIRQEEMKKLSLLIGGLQEEELSTSVKKRVHTESRIGASNSFDSGVAGLSSTSQFTSSSQLDETSQLWAQPDTVPVSVPADIRFSVWISFFEIYNELLYDLLEPPSHQHKRQTLRLCEDQNGNPYVKDLNWIHVRDVEEAWKLLKVGRKNQSFASTHMNQQSSRSHSIFSIRILHLQGEGDIVPKISELSLCDLAGSERCKHQKSGERLKEAGNINTSLHTLGRCIAALRQNQQNRSKQNLIPFRDSKLTRVFQGFFTGRGRSCMIVNVNPCASTYDETLHAAKFSALASQLVHAPPVHLGIPSLHSFIKKHSPQVGPGLEKEDKADSDLEDSPEDEADVSVYGKEELLQVVEAMKALLLKERQEKLQLEIQLREEICNEMVEQMQQREQWCSERLDNQKELMEELYEEKLKILKESLTTFYQEQIQERDEKIEELETLLQEAKQQPAAQQSGGLSLLRRSQRLAASASTQQFQEVKAELEQCKTELSSTTAELHKYQQVLKPPPPAKPFTIDVDKKLEEGQKNIRLLRTELQKLGQSLQSAERACCHSTGAGKLRQALTNCDDILIKQNQTLAELQNNMVLVKLDLQKKAACIAEQYHTVLKLQGQASAKKRLGANQENQQPNHQPPGKKPFLRNLLPRTPTCQSSTDSSPYARILRSRHSPLLKSPFGKKY</sequence>
<feature type="initiator methionine" description="Removed" evidence="2">
    <location>
        <position position="1"/>
    </location>
</feature>
<feature type="chain" id="PRO_0000125461" description="Kinesin-like protein KIF20A">
    <location>
        <begin position="2"/>
        <end position="887"/>
    </location>
</feature>
<feature type="domain" description="Kinesin motor" evidence="4">
    <location>
        <begin position="63"/>
        <end position="506"/>
    </location>
</feature>
<feature type="region of interest" description="Disordered" evidence="5">
    <location>
        <begin position="527"/>
        <end position="553"/>
    </location>
</feature>
<feature type="region of interest" description="Globular" evidence="3">
    <location>
        <begin position="805"/>
        <end position="887"/>
    </location>
</feature>
<feature type="region of interest" description="Disordered" evidence="5">
    <location>
        <begin position="826"/>
        <end position="875"/>
    </location>
</feature>
<feature type="coiled-coil region" evidence="3">
    <location>
        <begin position="559"/>
        <end position="804"/>
    </location>
</feature>
<feature type="compositionally biased region" description="Acidic residues" evidence="5">
    <location>
        <begin position="543"/>
        <end position="553"/>
    </location>
</feature>
<feature type="compositionally biased region" description="Polar residues" evidence="5">
    <location>
        <begin position="856"/>
        <end position="865"/>
    </location>
</feature>
<feature type="binding site" evidence="4">
    <location>
        <begin position="159"/>
        <end position="166"/>
    </location>
    <ligand>
        <name>ATP</name>
        <dbReference type="ChEBI" id="CHEBI:30616"/>
    </ligand>
</feature>
<feature type="modified residue" description="N-acetylserine" evidence="2">
    <location>
        <position position="2"/>
    </location>
</feature>
<feature type="modified residue" description="Phosphoserine" evidence="2">
    <location>
        <position position="7"/>
    </location>
</feature>
<feature type="modified residue" description="Phosphoserine" evidence="2">
    <location>
        <position position="14"/>
    </location>
</feature>
<feature type="modified residue" description="Phosphoserine" evidence="2">
    <location>
        <position position="21"/>
    </location>
</feature>
<feature type="modified residue" description="Phosphoserine; by PLK1" evidence="2">
    <location>
        <position position="527"/>
    </location>
</feature>
<feature type="modified residue" description="Phosphoserine" evidence="2">
    <location>
        <position position="683"/>
    </location>
</feature>
<feature type="modified residue" description="Phosphoserine" evidence="2">
    <location>
        <position position="823"/>
    </location>
</feature>
<feature type="modified residue" description="Phosphothreonine" evidence="2">
    <location>
        <position position="855"/>
    </location>
</feature>
<feature type="modified residue" description="Phosphoserine" evidence="2">
    <location>
        <position position="865"/>
    </location>
</feature>
<feature type="modified residue" description="Phosphoserine" evidence="2">
    <location>
        <position position="876"/>
    </location>
</feature>
<feature type="modified residue" description="Phosphoserine" evidence="2">
    <location>
        <position position="881"/>
    </location>
</feature>
<feature type="strand" evidence="10">
    <location>
        <begin position="67"/>
        <end position="70"/>
    </location>
</feature>
<feature type="helix" evidence="10">
    <location>
        <begin position="75"/>
        <end position="78"/>
    </location>
</feature>
<feature type="strand" evidence="9">
    <location>
        <begin position="83"/>
        <end position="85"/>
    </location>
</feature>
<feature type="strand" evidence="10">
    <location>
        <begin position="87"/>
        <end position="97"/>
    </location>
</feature>
<feature type="helix" evidence="10">
    <location>
        <begin position="102"/>
        <end position="104"/>
    </location>
</feature>
<feature type="strand" evidence="10">
    <location>
        <begin position="118"/>
        <end position="121"/>
    </location>
</feature>
<feature type="strand" evidence="10">
    <location>
        <begin position="123"/>
        <end position="126"/>
    </location>
</feature>
<feature type="helix" evidence="10">
    <location>
        <begin position="132"/>
        <end position="139"/>
    </location>
</feature>
<feature type="helix" evidence="10">
    <location>
        <begin position="141"/>
        <end position="149"/>
    </location>
</feature>
<feature type="strand" evidence="10">
    <location>
        <begin position="153"/>
        <end position="158"/>
    </location>
</feature>
<feature type="helix" evidence="10">
    <location>
        <begin position="165"/>
        <end position="169"/>
    </location>
</feature>
<feature type="strand" evidence="10">
    <location>
        <begin position="173"/>
        <end position="175"/>
    </location>
</feature>
<feature type="helix" evidence="10">
    <location>
        <begin position="178"/>
        <end position="189"/>
    </location>
</feature>
<feature type="turn" evidence="10">
    <location>
        <begin position="190"/>
        <end position="192"/>
    </location>
</feature>
<feature type="strand" evidence="10">
    <location>
        <begin position="204"/>
        <end position="206"/>
    </location>
</feature>
<feature type="strand" evidence="9">
    <location>
        <begin position="207"/>
        <end position="210"/>
    </location>
</feature>
<feature type="helix" evidence="10">
    <location>
        <begin position="213"/>
        <end position="228"/>
    </location>
</feature>
<feature type="turn" evidence="10">
    <location>
        <begin position="293"/>
        <end position="295"/>
    </location>
</feature>
<feature type="strand" evidence="10">
    <location>
        <begin position="296"/>
        <end position="308"/>
    </location>
</feature>
<feature type="strand" evidence="10">
    <location>
        <begin position="311"/>
        <end position="317"/>
    </location>
</feature>
<feature type="strand" evidence="10">
    <location>
        <begin position="330"/>
        <end position="332"/>
    </location>
</feature>
<feature type="strand" evidence="10">
    <location>
        <begin position="338"/>
        <end position="342"/>
    </location>
</feature>
<feature type="strand" evidence="10">
    <location>
        <begin position="346"/>
        <end position="350"/>
    </location>
</feature>
<feature type="helix" evidence="10">
    <location>
        <begin position="351"/>
        <end position="364"/>
    </location>
</feature>
<feature type="strand" evidence="10">
    <location>
        <begin position="367"/>
        <end position="369"/>
    </location>
</feature>
<feature type="strand" evidence="10">
    <location>
        <begin position="371"/>
        <end position="373"/>
    </location>
</feature>
<feature type="strand" evidence="10">
    <location>
        <begin position="375"/>
        <end position="377"/>
    </location>
</feature>
<feature type="strand" evidence="10">
    <location>
        <begin position="379"/>
        <end position="393"/>
    </location>
</feature>
<feature type="strand" evidence="10">
    <location>
        <begin position="399"/>
        <end position="407"/>
    </location>
</feature>
<feature type="helix" evidence="10">
    <location>
        <begin position="422"/>
        <end position="445"/>
    </location>
</feature>
<feature type="turn" evidence="10">
    <location>
        <begin position="446"/>
        <end position="449"/>
    </location>
</feature>
<feature type="helix" evidence="10">
    <location>
        <begin position="458"/>
        <end position="460"/>
    </location>
</feature>
<feature type="helix" evidence="10">
    <location>
        <begin position="462"/>
        <end position="466"/>
    </location>
</feature>
<feature type="helix" evidence="10">
    <location>
        <begin position="468"/>
        <end position="472"/>
    </location>
</feature>
<feature type="strand" evidence="10">
    <location>
        <begin position="474"/>
        <end position="476"/>
    </location>
</feature>
<feature type="strand" evidence="10">
    <location>
        <begin position="479"/>
        <end position="483"/>
    </location>
</feature>
<feature type="helix" evidence="10">
    <location>
        <begin position="487"/>
        <end position="489"/>
    </location>
</feature>
<feature type="helix" evidence="10">
    <location>
        <begin position="490"/>
        <end position="500"/>
    </location>
</feature>
<feature type="strand" evidence="10">
    <location>
        <begin position="502"/>
        <end position="506"/>
    </location>
</feature>
<feature type="helix" evidence="8">
    <location>
        <begin position="603"/>
        <end position="644"/>
    </location>
</feature>
<organism>
    <name type="scientific">Mus musculus</name>
    <name type="common">Mouse</name>
    <dbReference type="NCBI Taxonomy" id="10090"/>
    <lineage>
        <taxon>Eukaryota</taxon>
        <taxon>Metazoa</taxon>
        <taxon>Chordata</taxon>
        <taxon>Craniata</taxon>
        <taxon>Vertebrata</taxon>
        <taxon>Euteleostomi</taxon>
        <taxon>Mammalia</taxon>
        <taxon>Eutheria</taxon>
        <taxon>Euarchontoglires</taxon>
        <taxon>Glires</taxon>
        <taxon>Rodentia</taxon>
        <taxon>Myomorpha</taxon>
        <taxon>Muroidea</taxon>
        <taxon>Muridae</taxon>
        <taxon>Murinae</taxon>
        <taxon>Mus</taxon>
        <taxon>Mus</taxon>
    </lineage>
</organism>
<name>KI20A_MOUSE</name>
<proteinExistence type="evidence at protein level"/>
<dbReference type="EMBL" id="Y09632">
    <property type="protein sequence ID" value="CAA70845.1"/>
    <property type="molecule type" value="mRNA"/>
</dbReference>
<dbReference type="EMBL" id="AK083412">
    <property type="protein sequence ID" value="BAC38906.1"/>
    <property type="molecule type" value="mRNA"/>
</dbReference>
<dbReference type="EMBL" id="AK084732">
    <property type="protein sequence ID" value="BAC39267.1"/>
    <property type="molecule type" value="mRNA"/>
</dbReference>
<dbReference type="EMBL" id="AK144844">
    <property type="protein sequence ID" value="BAE26095.1"/>
    <property type="molecule type" value="mRNA"/>
</dbReference>
<dbReference type="EMBL" id="BC060608">
    <property type="protein sequence ID" value="AAH60608.1"/>
    <property type="molecule type" value="mRNA"/>
</dbReference>
<dbReference type="CCDS" id="CCDS29131.1"/>
<dbReference type="RefSeq" id="NP_001159878.1">
    <property type="nucleotide sequence ID" value="NM_001166406.1"/>
</dbReference>
<dbReference type="RefSeq" id="NP_001159879.1">
    <property type="nucleotide sequence ID" value="NM_001166407.1"/>
</dbReference>
<dbReference type="RefSeq" id="NP_033030.1">
    <property type="nucleotide sequence ID" value="NM_009004.4"/>
</dbReference>
<dbReference type="PDB" id="5LEF">
    <property type="method" value="X-ray"/>
    <property type="resolution" value="2.09 A"/>
    <property type="chains" value="C/D=603-665"/>
</dbReference>
<dbReference type="PDB" id="5ND2">
    <property type="method" value="EM"/>
    <property type="resolution" value="5.80 A"/>
    <property type="chains" value="C=21-521"/>
</dbReference>
<dbReference type="PDB" id="5ND3">
    <property type="method" value="EM"/>
    <property type="resolution" value="6.10 A"/>
    <property type="chains" value="C=21-521"/>
</dbReference>
<dbReference type="PDB" id="5ND4">
    <property type="method" value="EM"/>
    <property type="resolution" value="4.40 A"/>
    <property type="chains" value="C=21-521"/>
</dbReference>
<dbReference type="PDB" id="5ND7">
    <property type="method" value="EM"/>
    <property type="resolution" value="7.90 A"/>
    <property type="chains" value="C=21-521"/>
</dbReference>
<dbReference type="PDB" id="8BJS">
    <property type="method" value="X-ray"/>
    <property type="resolution" value="2.73 A"/>
    <property type="chains" value="A=54-513"/>
</dbReference>
<dbReference type="PDB" id="8F18">
    <property type="method" value="EM"/>
    <property type="resolution" value="3.20 A"/>
    <property type="chains" value="K=1-565"/>
</dbReference>
<dbReference type="PDB" id="8F1A">
    <property type="method" value="EM"/>
    <property type="resolution" value="3.10 A"/>
    <property type="chains" value="K=1-565"/>
</dbReference>
<dbReference type="PDBsum" id="5LEF"/>
<dbReference type="PDBsum" id="5ND2"/>
<dbReference type="PDBsum" id="5ND3"/>
<dbReference type="PDBsum" id="5ND4"/>
<dbReference type="PDBsum" id="5ND7"/>
<dbReference type="PDBsum" id="8BJS"/>
<dbReference type="PDBsum" id="8F18"/>
<dbReference type="PDBsum" id="8F1A"/>
<dbReference type="EMDB" id="EMD-28787"/>
<dbReference type="EMDB" id="EMD-28789"/>
<dbReference type="EMDB" id="EMD-3620"/>
<dbReference type="EMDB" id="EMD-3621"/>
<dbReference type="EMDB" id="EMD-3622"/>
<dbReference type="EMDB" id="EMD-3623"/>
<dbReference type="SMR" id="P97329"/>
<dbReference type="BioGRID" id="202552">
    <property type="interactions" value="12"/>
</dbReference>
<dbReference type="FunCoup" id="P97329">
    <property type="interactions" value="1208"/>
</dbReference>
<dbReference type="IntAct" id="P97329">
    <property type="interactions" value="10"/>
</dbReference>
<dbReference type="STRING" id="10090.ENSMUSP00000157839"/>
<dbReference type="iPTMnet" id="P97329"/>
<dbReference type="PhosphoSitePlus" id="P97329"/>
<dbReference type="SwissPalm" id="P97329"/>
<dbReference type="jPOST" id="P97329"/>
<dbReference type="PaxDb" id="10090-ENSMUSP00000132659"/>
<dbReference type="PeptideAtlas" id="P97329"/>
<dbReference type="ProteomicsDB" id="263437"/>
<dbReference type="Pumba" id="P97329"/>
<dbReference type="Antibodypedia" id="26611">
    <property type="antibodies" value="314 antibodies from 28 providers"/>
</dbReference>
<dbReference type="DNASU" id="19348"/>
<dbReference type="Ensembl" id="ENSMUST00000166044.3">
    <property type="protein sequence ID" value="ENSMUSP00000132659.2"/>
    <property type="gene ID" value="ENSMUSG00000003779.17"/>
</dbReference>
<dbReference type="Ensembl" id="ENSMUST00000167161.9">
    <property type="protein sequence ID" value="ENSMUSP00000130045.2"/>
    <property type="gene ID" value="ENSMUSG00000003779.17"/>
</dbReference>
<dbReference type="Ensembl" id="ENSMUST00000237407.2">
    <property type="protein sequence ID" value="ENSMUSP00000157839.2"/>
    <property type="gene ID" value="ENSMUSG00000003779.17"/>
</dbReference>
<dbReference type="GeneID" id="19348"/>
<dbReference type="KEGG" id="mmu:19348"/>
<dbReference type="UCSC" id="uc008ela.2">
    <property type="organism name" value="mouse"/>
</dbReference>
<dbReference type="AGR" id="MGI:1201682"/>
<dbReference type="CTD" id="10112"/>
<dbReference type="MGI" id="MGI:1201682">
    <property type="gene designation" value="Kif20a"/>
</dbReference>
<dbReference type="VEuPathDB" id="HostDB:ENSMUSG00000003779"/>
<dbReference type="eggNOG" id="KOG0247">
    <property type="taxonomic scope" value="Eukaryota"/>
</dbReference>
<dbReference type="GeneTree" id="ENSGT00940000156931"/>
<dbReference type="HOGENOM" id="CLU_001485_2_5_1"/>
<dbReference type="InParanoid" id="P97329"/>
<dbReference type="OMA" id="NRHPQKA"/>
<dbReference type="OrthoDB" id="2403182at2759"/>
<dbReference type="PhylomeDB" id="P97329"/>
<dbReference type="TreeFam" id="TF105232"/>
<dbReference type="BRENDA" id="5.6.1.3">
    <property type="organism ID" value="3474"/>
</dbReference>
<dbReference type="Reactome" id="R-MMU-2132295">
    <property type="pathway name" value="MHC class II antigen presentation"/>
</dbReference>
<dbReference type="Reactome" id="R-MMU-6811434">
    <property type="pathway name" value="COPI-dependent Golgi-to-ER retrograde traffic"/>
</dbReference>
<dbReference type="Reactome" id="R-MMU-68884">
    <property type="pathway name" value="Mitotic Telophase/Cytokinesis"/>
</dbReference>
<dbReference type="Reactome" id="R-MMU-983189">
    <property type="pathway name" value="Kinesins"/>
</dbReference>
<dbReference type="BioGRID-ORCS" id="19348">
    <property type="hits" value="18 hits in 81 CRISPR screens"/>
</dbReference>
<dbReference type="ChiTaRS" id="Kif20a">
    <property type="organism name" value="mouse"/>
</dbReference>
<dbReference type="PRO" id="PR:P97329"/>
<dbReference type="Proteomes" id="UP000000589">
    <property type="component" value="Chromosome 18"/>
</dbReference>
<dbReference type="RNAct" id="P97329">
    <property type="molecule type" value="protein"/>
</dbReference>
<dbReference type="Bgee" id="ENSMUSG00000003779">
    <property type="expression patterns" value="Expressed in undifferentiated genital tubercle and 182 other cell types or tissues"/>
</dbReference>
<dbReference type="ExpressionAtlas" id="P97329">
    <property type="expression patterns" value="baseline and differential"/>
</dbReference>
<dbReference type="GO" id="GO:0032154">
    <property type="term" value="C:cleavage furrow"/>
    <property type="evidence" value="ECO:0007669"/>
    <property type="project" value="Ensembl"/>
</dbReference>
<dbReference type="GO" id="GO:0005794">
    <property type="term" value="C:Golgi apparatus"/>
    <property type="evidence" value="ECO:0007669"/>
    <property type="project" value="UniProtKB-SubCell"/>
</dbReference>
<dbReference type="GO" id="GO:0045171">
    <property type="term" value="C:intercellular bridge"/>
    <property type="evidence" value="ECO:0007669"/>
    <property type="project" value="Ensembl"/>
</dbReference>
<dbReference type="GO" id="GO:0005874">
    <property type="term" value="C:microtubule"/>
    <property type="evidence" value="ECO:0007669"/>
    <property type="project" value="UniProtKB-KW"/>
</dbReference>
<dbReference type="GO" id="GO:0030496">
    <property type="term" value="C:midbody"/>
    <property type="evidence" value="ECO:0000250"/>
    <property type="project" value="UniProtKB"/>
</dbReference>
<dbReference type="GO" id="GO:0072686">
    <property type="term" value="C:mitotic spindle"/>
    <property type="evidence" value="ECO:0007669"/>
    <property type="project" value="Ensembl"/>
</dbReference>
<dbReference type="GO" id="GO:0005654">
    <property type="term" value="C:nucleoplasm"/>
    <property type="evidence" value="ECO:0007669"/>
    <property type="project" value="Ensembl"/>
</dbReference>
<dbReference type="GO" id="GO:0005819">
    <property type="term" value="C:spindle"/>
    <property type="evidence" value="ECO:0000250"/>
    <property type="project" value="UniProtKB"/>
</dbReference>
<dbReference type="GO" id="GO:0005524">
    <property type="term" value="F:ATP binding"/>
    <property type="evidence" value="ECO:0007669"/>
    <property type="project" value="UniProtKB-KW"/>
</dbReference>
<dbReference type="GO" id="GO:0008017">
    <property type="term" value="F:microtubule binding"/>
    <property type="evidence" value="ECO:0007669"/>
    <property type="project" value="InterPro"/>
</dbReference>
<dbReference type="GO" id="GO:0003777">
    <property type="term" value="F:microtubule motor activity"/>
    <property type="evidence" value="ECO:0007669"/>
    <property type="project" value="InterPro"/>
</dbReference>
<dbReference type="GO" id="GO:0019901">
    <property type="term" value="F:protein kinase binding"/>
    <property type="evidence" value="ECO:0007669"/>
    <property type="project" value="Ensembl"/>
</dbReference>
<dbReference type="GO" id="GO:0001578">
    <property type="term" value="P:microtubule bundle formation"/>
    <property type="evidence" value="ECO:0000250"/>
    <property type="project" value="UniProtKB"/>
</dbReference>
<dbReference type="GO" id="GO:0007018">
    <property type="term" value="P:microtubule-based movement"/>
    <property type="evidence" value="ECO:0007669"/>
    <property type="project" value="InterPro"/>
</dbReference>
<dbReference type="GO" id="GO:0061952">
    <property type="term" value="P:midbody abscission"/>
    <property type="evidence" value="ECO:0000250"/>
    <property type="project" value="UniProtKB"/>
</dbReference>
<dbReference type="GO" id="GO:0000281">
    <property type="term" value="P:mitotic cytokinesis"/>
    <property type="evidence" value="ECO:0000250"/>
    <property type="project" value="UniProtKB"/>
</dbReference>
<dbReference type="GO" id="GO:0015031">
    <property type="term" value="P:protein transport"/>
    <property type="evidence" value="ECO:0007669"/>
    <property type="project" value="UniProtKB-KW"/>
</dbReference>
<dbReference type="GO" id="GO:0032465">
    <property type="term" value="P:regulation of cytokinesis"/>
    <property type="evidence" value="ECO:0000250"/>
    <property type="project" value="UniProtKB"/>
</dbReference>
<dbReference type="CDD" id="cd01368">
    <property type="entry name" value="KISc_KIF23_like"/>
    <property type="match status" value="1"/>
</dbReference>
<dbReference type="CDD" id="cd21787">
    <property type="entry name" value="RBD_KIF20A"/>
    <property type="match status" value="1"/>
</dbReference>
<dbReference type="FunFam" id="3.40.850.10:FF:000094">
    <property type="entry name" value="Kinesin-like protein"/>
    <property type="match status" value="1"/>
</dbReference>
<dbReference type="FunFam" id="3.40.850.10:FF:000095">
    <property type="entry name" value="Kinesin-like protein"/>
    <property type="match status" value="1"/>
</dbReference>
<dbReference type="Gene3D" id="3.40.850.10">
    <property type="entry name" value="Kinesin motor domain"/>
    <property type="match status" value="1"/>
</dbReference>
<dbReference type="InterPro" id="IPR047149">
    <property type="entry name" value="KIF11-like"/>
</dbReference>
<dbReference type="InterPro" id="IPR019821">
    <property type="entry name" value="Kinesin_motor_CS"/>
</dbReference>
<dbReference type="InterPro" id="IPR001752">
    <property type="entry name" value="Kinesin_motor_dom"/>
</dbReference>
<dbReference type="InterPro" id="IPR036961">
    <property type="entry name" value="Kinesin_motor_dom_sf"/>
</dbReference>
<dbReference type="InterPro" id="IPR027417">
    <property type="entry name" value="P-loop_NTPase"/>
</dbReference>
<dbReference type="PANTHER" id="PTHR47970:SF29">
    <property type="entry name" value="KINESIN FAMILY MEMBER 20B"/>
    <property type="match status" value="1"/>
</dbReference>
<dbReference type="PANTHER" id="PTHR47970">
    <property type="entry name" value="KINESIN-LIKE PROTEIN KIF11"/>
    <property type="match status" value="1"/>
</dbReference>
<dbReference type="Pfam" id="PF00225">
    <property type="entry name" value="Kinesin"/>
    <property type="match status" value="1"/>
</dbReference>
<dbReference type="PRINTS" id="PR00380">
    <property type="entry name" value="KINESINHEAVY"/>
</dbReference>
<dbReference type="SMART" id="SM00129">
    <property type="entry name" value="KISc"/>
    <property type="match status" value="1"/>
</dbReference>
<dbReference type="SUPFAM" id="SSF52540">
    <property type="entry name" value="P-loop containing nucleoside triphosphate hydrolases"/>
    <property type="match status" value="1"/>
</dbReference>
<dbReference type="PROSITE" id="PS00411">
    <property type="entry name" value="KINESIN_MOTOR_1"/>
    <property type="match status" value="1"/>
</dbReference>
<dbReference type="PROSITE" id="PS50067">
    <property type="entry name" value="KINESIN_MOTOR_2"/>
    <property type="match status" value="1"/>
</dbReference>
<keyword id="KW-0002">3D-structure</keyword>
<keyword id="KW-0007">Acetylation</keyword>
<keyword id="KW-0067">ATP-binding</keyword>
<keyword id="KW-0175">Coiled coil</keyword>
<keyword id="KW-0963">Cytoplasm</keyword>
<keyword id="KW-0206">Cytoskeleton</keyword>
<keyword id="KW-0333">Golgi apparatus</keyword>
<keyword id="KW-0493">Microtubule</keyword>
<keyword id="KW-0505">Motor protein</keyword>
<keyword id="KW-0547">Nucleotide-binding</keyword>
<keyword id="KW-0597">Phosphoprotein</keyword>
<keyword id="KW-0653">Protein transport</keyword>
<keyword id="KW-1185">Reference proteome</keyword>
<keyword id="KW-0813">Transport</keyword>
<gene>
    <name type="primary">Kif20a</name>
    <name type="synonym">Rab6kifl</name>
</gene>
<comment type="function">
    <text evidence="1 6">Mitotic kinesin required for chromosome passenger complex (CPC)-mediated cytokinesis. Following phosphorylation by PLK1, involved in recruitment of PLK1 to the central spindle (By similarity). Interacts with guanosine triphosphate (GTP)-bound forms of RAB6A and RAB6B. May act as a motor required for the retrograde RAB6 regulated transport of Golgi membranes and associated vesicles along microtubules. Has a microtubule plus end-directed motility.</text>
</comment>
<comment type="subcellular location">
    <subcellularLocation>
        <location evidence="1">Golgi apparatus</location>
    </subcellularLocation>
    <subcellularLocation>
        <location evidence="7">Cytoplasm</location>
        <location evidence="7">Cytoskeleton</location>
        <location evidence="7">Spindle</location>
    </subcellularLocation>
    <text evidence="2">Localizes to the spindle midzone during anaphase and telophase.</text>
</comment>
<comment type="tissue specificity">
    <text evidence="6">Ubiquitously expressed, with highest levels in spleen and testis.</text>
</comment>
<comment type="PTM">
    <text evidence="1">Phosphorylated by PLK1 at Ser-527 during mitosis, creating a docking site for PLK1 and recruiting PLK1 at central spindle.</text>
</comment>
<comment type="similarity">
    <text evidence="4">Belongs to the TRAFAC class myosin-kinesin ATPase superfamily. Kinesin family.</text>
</comment>
<accession>P97329</accession>
<accession>Q542M4</accession>